<evidence type="ECO:0000250" key="1">
    <source>
        <dbReference type="UniProtKB" id="Q00578"/>
    </source>
</evidence>
<evidence type="ECO:0000255" key="2">
    <source>
        <dbReference type="PROSITE-ProRule" id="PRU00541"/>
    </source>
</evidence>
<evidence type="ECO:0000255" key="3">
    <source>
        <dbReference type="PROSITE-ProRule" id="PRU00542"/>
    </source>
</evidence>
<evidence type="ECO:0000256" key="4">
    <source>
        <dbReference type="SAM" id="MobiDB-lite"/>
    </source>
</evidence>
<evidence type="ECO:0000269" key="5">
    <source>
    </source>
</evidence>
<evidence type="ECO:0000269" key="6">
    <source>
    </source>
</evidence>
<evidence type="ECO:0000269" key="7">
    <source>
    </source>
</evidence>
<evidence type="ECO:0000269" key="8">
    <source>
    </source>
</evidence>
<evidence type="ECO:0000303" key="9">
    <source>
    </source>
</evidence>
<evidence type="ECO:0000303" key="10">
    <source>
    </source>
</evidence>
<evidence type="ECO:0000305" key="11"/>
<evidence type="ECO:0000305" key="12">
    <source>
    </source>
</evidence>
<feature type="chain" id="PRO_0000101993" description="General transcription and DNA repair factor IIH helicase/translocase subunit XPB">
    <location>
        <begin position="1"/>
        <end position="804"/>
    </location>
</feature>
<feature type="domain" description="Helicase ATP-binding" evidence="2">
    <location>
        <begin position="335"/>
        <end position="497"/>
    </location>
</feature>
<feature type="domain" description="Helicase C-terminal" evidence="3">
    <location>
        <begin position="551"/>
        <end position="705"/>
    </location>
</feature>
<feature type="region of interest" description="Disordered" evidence="4">
    <location>
        <begin position="1"/>
        <end position="61"/>
    </location>
</feature>
<feature type="region of interest" description="Disordered" evidence="4">
    <location>
        <begin position="220"/>
        <end position="255"/>
    </location>
</feature>
<feature type="region of interest" description="Disordered" evidence="4">
    <location>
        <begin position="736"/>
        <end position="761"/>
    </location>
</feature>
<feature type="region of interest" description="Disordered" evidence="4">
    <location>
        <begin position="782"/>
        <end position="804"/>
    </location>
</feature>
<feature type="short sequence motif" description="DEVH box">
    <location>
        <begin position="450"/>
        <end position="453"/>
    </location>
</feature>
<feature type="compositionally biased region" description="Acidic residues" evidence="4">
    <location>
        <begin position="14"/>
        <end position="36"/>
    </location>
</feature>
<feature type="compositionally biased region" description="Low complexity" evidence="4">
    <location>
        <begin position="47"/>
        <end position="60"/>
    </location>
</feature>
<feature type="compositionally biased region" description="Low complexity" evidence="4">
    <location>
        <begin position="220"/>
        <end position="229"/>
    </location>
</feature>
<feature type="compositionally biased region" description="Basic and acidic residues" evidence="4">
    <location>
        <begin position="236"/>
        <end position="255"/>
    </location>
</feature>
<feature type="compositionally biased region" description="Basic and acidic residues" evidence="4">
    <location>
        <begin position="784"/>
        <end position="793"/>
    </location>
</feature>
<feature type="compositionally biased region" description="Basic residues" evidence="4">
    <location>
        <begin position="794"/>
        <end position="804"/>
    </location>
</feature>
<feature type="binding site" evidence="2">
    <location>
        <begin position="348"/>
        <end position="355"/>
    </location>
    <ligand>
        <name>ATP</name>
        <dbReference type="ChEBI" id="CHEBI:30616"/>
    </ligand>
</feature>
<feature type="mutagenesis site" description="Inhibits growth when overexpressed, dominant-negative to wild-type in vivo, inhibits transcription in vitro, strongly inhibits promoter opening." evidence="7">
    <original>K</original>
    <variation>R</variation>
    <location>
        <position position="354"/>
    </location>
</feature>
<feature type="mutagenesis site" description="Inhibits growth when overexpressed, dominant-negative to wild-type in vivo, inhibits transcription in vitro, promoter opening occurs and no longer requires nucleotide, promoter clearance and RNA polymerase elongation do not occur." evidence="7">
    <original>T</original>
    <variation>A</variation>
    <location>
        <position position="478"/>
    </location>
</feature>
<feature type="mutagenesis site" description="Inhibits growth when overexpressed, dominant-negative to wild-type in vivo, inhibits transcription in vitro, promoter opening occurs and no longer requires nucleotide, promoter clearance and RNA polymerase elongation do not occur." evidence="7">
    <original>Q</original>
    <variation>A</variation>
    <location>
        <position position="647"/>
    </location>
</feature>
<name>ERCC3_SCHPO</name>
<sequence length="804" mass="91345">MSLKRKNNAREGTPDEDLEEYSDYSDVDNYGEEDDDSYKPAPRIRINNNKTKAQTTTNSNEARQSGISAMFGQNDFSNLLGLKLDHTARPLWINPIDGRIILEAFSPLAEQAIDFLVTISEPVSRPAFIHEYRITAYSLYAAVSVGLKTEDIIAVLDRLSKTPIPPSIVDFIRACTVSYGKVKLVLKKNRYFIESGDASVLRLLLRDPVIGPLRIDYSTQSSKQKSSKPSNEDNVEDKKDITNDSSKETAEKSSSDELFSAVVGLQEEEDDEDAVHLFEIKHSSVETIKKRCAEIDYPLLEEYDFRNDNINPDLPIDLKPSTQIRPYQEKSLSKMFGNGRARSGIIVLPCGAGKTLVGITAACTIKKSVIVLCTSSVSVMQWRQQFLQWSNIKPDHIAVFTADHKERFHSEAGVVVSTYSMVANTRNRSYDSQKMMDFLTGREWGFILLDEVHVVPAAMFRRVVTTIAAHTKLGLTATLVREDDKIDDLNFLIGPKMYEANWMDLAQKGHIAKVQCAEVWCAMTTEFYNEYLRENSRKRMLLYIMNPKKFQACQFLIDYHEKRGDKIIVFSDNVYALRAYAIKLGKYFIYGGTPQQERMRILENFQYNELVNTIFLSKVGDTSIDLPEATCLIQISSHYGSRRQEAQRLGRILRAKRRNDEGFNAFFYSLVSKDTQEMYYSSKRQAFLIDQGYAFKVITNLKGMENLPNLAYASKAERLELLQEVLLQNEEAADLDDGEDTSFGSRSLSRAPAKAKRSSGSLSTLAGADNMAYVEYNKSANKQLKKDSKEHHALFRKHLYTKRR</sequence>
<reference key="1">
    <citation type="journal article" date="2002" name="Nature">
        <title>The genome sequence of Schizosaccharomyces pombe.</title>
        <authorList>
            <person name="Wood V."/>
            <person name="Gwilliam R."/>
            <person name="Rajandream M.A."/>
            <person name="Lyne M.H."/>
            <person name="Lyne R."/>
            <person name="Stewart A."/>
            <person name="Sgouros J.G."/>
            <person name="Peat N."/>
            <person name="Hayles J."/>
            <person name="Baker S.G."/>
            <person name="Basham D."/>
            <person name="Bowman S."/>
            <person name="Brooks K."/>
            <person name="Brown D."/>
            <person name="Brown S."/>
            <person name="Chillingworth T."/>
            <person name="Churcher C.M."/>
            <person name="Collins M."/>
            <person name="Connor R."/>
            <person name="Cronin A."/>
            <person name="Davis P."/>
            <person name="Feltwell T."/>
            <person name="Fraser A."/>
            <person name="Gentles S."/>
            <person name="Goble A."/>
            <person name="Hamlin N."/>
            <person name="Harris D.E."/>
            <person name="Hidalgo J."/>
            <person name="Hodgson G."/>
            <person name="Holroyd S."/>
            <person name="Hornsby T."/>
            <person name="Howarth S."/>
            <person name="Huckle E.J."/>
            <person name="Hunt S."/>
            <person name="Jagels K."/>
            <person name="James K.D."/>
            <person name="Jones L."/>
            <person name="Jones M."/>
            <person name="Leather S."/>
            <person name="McDonald S."/>
            <person name="McLean J."/>
            <person name="Mooney P."/>
            <person name="Moule S."/>
            <person name="Mungall K.L."/>
            <person name="Murphy L.D."/>
            <person name="Niblett D."/>
            <person name="Odell C."/>
            <person name="Oliver K."/>
            <person name="O'Neil S."/>
            <person name="Pearson D."/>
            <person name="Quail M.A."/>
            <person name="Rabbinowitsch E."/>
            <person name="Rutherford K.M."/>
            <person name="Rutter S."/>
            <person name="Saunders D."/>
            <person name="Seeger K."/>
            <person name="Sharp S."/>
            <person name="Skelton J."/>
            <person name="Simmonds M.N."/>
            <person name="Squares R."/>
            <person name="Squares S."/>
            <person name="Stevens K."/>
            <person name="Taylor K."/>
            <person name="Taylor R.G."/>
            <person name="Tivey A."/>
            <person name="Walsh S.V."/>
            <person name="Warren T."/>
            <person name="Whitehead S."/>
            <person name="Woodward J.R."/>
            <person name="Volckaert G."/>
            <person name="Aert R."/>
            <person name="Robben J."/>
            <person name="Grymonprez B."/>
            <person name="Weltjens I."/>
            <person name="Vanstreels E."/>
            <person name="Rieger M."/>
            <person name="Schaefer M."/>
            <person name="Mueller-Auer S."/>
            <person name="Gabel C."/>
            <person name="Fuchs M."/>
            <person name="Duesterhoeft A."/>
            <person name="Fritzc C."/>
            <person name="Holzer E."/>
            <person name="Moestl D."/>
            <person name="Hilbert H."/>
            <person name="Borzym K."/>
            <person name="Langer I."/>
            <person name="Beck A."/>
            <person name="Lehrach H."/>
            <person name="Reinhardt R."/>
            <person name="Pohl T.M."/>
            <person name="Eger P."/>
            <person name="Zimmermann W."/>
            <person name="Wedler H."/>
            <person name="Wambutt R."/>
            <person name="Purnelle B."/>
            <person name="Goffeau A."/>
            <person name="Cadieu E."/>
            <person name="Dreano S."/>
            <person name="Gloux S."/>
            <person name="Lelaure V."/>
            <person name="Mottier S."/>
            <person name="Galibert F."/>
            <person name="Aves S.J."/>
            <person name="Xiang Z."/>
            <person name="Hunt C."/>
            <person name="Moore K."/>
            <person name="Hurst S.M."/>
            <person name="Lucas M."/>
            <person name="Rochet M."/>
            <person name="Gaillardin C."/>
            <person name="Tallada V.A."/>
            <person name="Garzon A."/>
            <person name="Thode G."/>
            <person name="Daga R.R."/>
            <person name="Cruzado L."/>
            <person name="Jimenez J."/>
            <person name="Sanchez M."/>
            <person name="del Rey F."/>
            <person name="Benito J."/>
            <person name="Dominguez A."/>
            <person name="Revuelta J.L."/>
            <person name="Moreno S."/>
            <person name="Armstrong J."/>
            <person name="Forsburg S.L."/>
            <person name="Cerutti L."/>
            <person name="Lowe T."/>
            <person name="McCombie W.R."/>
            <person name="Paulsen I."/>
            <person name="Potashkin J."/>
            <person name="Shpakovski G.V."/>
            <person name="Ussery D."/>
            <person name="Barrell B.G."/>
            <person name="Nurse P."/>
        </authorList>
    </citation>
    <scope>NUCLEOTIDE SEQUENCE [LARGE SCALE GENOMIC DNA]</scope>
    <source>
        <strain>972 / ATCC 24843</strain>
    </source>
</reference>
<reference key="2">
    <citation type="journal article" date="2000" name="Genes Cells">
        <title>Large-scale screening of intracellular protein localization in living fission yeast cells by the use of a GFP-fusion genomic DNA library.</title>
        <authorList>
            <person name="Ding D.-Q."/>
            <person name="Tomita Y."/>
            <person name="Yamamoto A."/>
            <person name="Chikashige Y."/>
            <person name="Haraguchi T."/>
            <person name="Hiraoka Y."/>
        </authorList>
    </citation>
    <scope>NUCLEOTIDE SEQUENCE [LARGE SCALE GENOMIC DNA] OF 126-313</scope>
    <scope>SUBCELLULAR LOCATION</scope>
    <source>
        <strain>ATCC 38364 / 968</strain>
    </source>
</reference>
<reference key="3">
    <citation type="journal article" date="2003" name="J. Biol. Chem.">
        <title>Mediator influences Schizosaccharomyces pombe RNA polymerase II-dependent transcription in vitro.</title>
        <authorList>
            <person name="Spaehr H."/>
            <person name="Khorosjutina O."/>
            <person name="Baraznenok V."/>
            <person name="Linder T."/>
            <person name="Samuelsen C.O."/>
            <person name="Hermand D."/>
            <person name="Maekelae T.P."/>
            <person name="Holmberg S."/>
            <person name="Gustafsson C.M."/>
        </authorList>
    </citation>
    <scope>SUBUNIT</scope>
</reference>
<reference key="4">
    <citation type="journal article" date="2005" name="Nat. Struct. Mol. Biol.">
        <title>TFIIH XPB mutants suggest a unified bacterial-like mechanism for promoter opening but not escape.</title>
        <authorList>
            <person name="Lin Y.C."/>
            <person name="Choi W.S."/>
            <person name="Gralla J.D."/>
        </authorList>
    </citation>
    <scope>FUNCTION IN PROMOTER ESCAPE</scope>
    <scope>MUTAGENESIS OF LYS-354; THR-478 AND GLN-647</scope>
</reference>
<reference key="5">
    <citation type="journal article" date="2007" name="Genes Cells">
        <title>Participation of XPB/Ptr8p, a component of TFIIH, in nucleocytoplasmic transport of mRNA in fission yeast.</title>
        <authorList>
            <person name="Mizuki F."/>
            <person name="Namiki T."/>
            <person name="Sato H."/>
            <person name="Furukawa H."/>
            <person name="Matsusaka T."/>
            <person name="Ohshima Y."/>
            <person name="Ishibashi R."/>
            <person name="Andoh T."/>
            <person name="Tani T."/>
        </authorList>
    </citation>
    <scope>FUNCTION IN MRNA EXPORT</scope>
</reference>
<dbReference type="EC" id="5.6.2.4" evidence="12"/>
<dbReference type="EMBL" id="CU329670">
    <property type="protein sequence ID" value="CAB11506.1"/>
    <property type="molecule type" value="Genomic_DNA"/>
</dbReference>
<dbReference type="EMBL" id="AB027988">
    <property type="protein sequence ID" value="BAA87292.1"/>
    <property type="molecule type" value="Genomic_DNA"/>
</dbReference>
<dbReference type="PIR" id="T37821">
    <property type="entry name" value="T37821"/>
</dbReference>
<dbReference type="RefSeq" id="NP_593474.1">
    <property type="nucleotide sequence ID" value="NM_001018907.2"/>
</dbReference>
<dbReference type="SMR" id="O13768"/>
<dbReference type="BioGRID" id="278649">
    <property type="interactions" value="5"/>
</dbReference>
<dbReference type="FunCoup" id="O13768">
    <property type="interactions" value="699"/>
</dbReference>
<dbReference type="IntAct" id="O13768">
    <property type="interactions" value="1"/>
</dbReference>
<dbReference type="STRING" id="284812.O13768"/>
<dbReference type="iPTMnet" id="O13768"/>
<dbReference type="PaxDb" id="4896-SPAC17A5.06.1"/>
<dbReference type="EnsemblFungi" id="SPAC17A5.06.1">
    <property type="protein sequence ID" value="SPAC17A5.06.1:pep"/>
    <property type="gene ID" value="SPAC17A5.06"/>
</dbReference>
<dbReference type="GeneID" id="2542174"/>
<dbReference type="KEGG" id="spo:2542174"/>
<dbReference type="PomBase" id="SPAC17A5.06">
    <property type="gene designation" value="ptr8"/>
</dbReference>
<dbReference type="VEuPathDB" id="FungiDB:SPAC17A5.06"/>
<dbReference type="eggNOG" id="KOG1123">
    <property type="taxonomic scope" value="Eukaryota"/>
</dbReference>
<dbReference type="HOGENOM" id="CLU_008213_0_0_1"/>
<dbReference type="InParanoid" id="O13768"/>
<dbReference type="OMA" id="RCQEIDY"/>
<dbReference type="PhylomeDB" id="O13768"/>
<dbReference type="Reactome" id="R-SPO-113418">
    <property type="pathway name" value="Formation of the Early Elongation Complex"/>
</dbReference>
<dbReference type="Reactome" id="R-SPO-5696395">
    <property type="pathway name" value="Formation of Incision Complex in GG-NER"/>
</dbReference>
<dbReference type="Reactome" id="R-SPO-5696400">
    <property type="pathway name" value="Dual Incision in GG-NER"/>
</dbReference>
<dbReference type="Reactome" id="R-SPO-674695">
    <property type="pathway name" value="RNA Polymerase II Pre-transcription Events"/>
</dbReference>
<dbReference type="Reactome" id="R-SPO-6781823">
    <property type="pathway name" value="Formation of TC-NER Pre-Incision Complex"/>
</dbReference>
<dbReference type="Reactome" id="R-SPO-6782135">
    <property type="pathway name" value="Dual incision in TC-NER"/>
</dbReference>
<dbReference type="Reactome" id="R-SPO-6782210">
    <property type="pathway name" value="Gap-filling DNA repair synthesis and ligation in TC-NER"/>
</dbReference>
<dbReference type="Reactome" id="R-SPO-6796648">
    <property type="pathway name" value="TP53 Regulates Transcription of DNA Repair Genes"/>
</dbReference>
<dbReference type="Reactome" id="R-SPO-72086">
    <property type="pathway name" value="mRNA Capping"/>
</dbReference>
<dbReference type="Reactome" id="R-SPO-73772">
    <property type="pathway name" value="RNA Polymerase I Promoter Escape"/>
</dbReference>
<dbReference type="Reactome" id="R-SPO-73776">
    <property type="pathway name" value="RNA Polymerase II Promoter Escape"/>
</dbReference>
<dbReference type="Reactome" id="R-SPO-73779">
    <property type="pathway name" value="RNA Polymerase II Transcription Pre-Initiation And Promoter Opening"/>
</dbReference>
<dbReference type="Reactome" id="R-SPO-75953">
    <property type="pathway name" value="RNA Polymerase II Transcription Initiation"/>
</dbReference>
<dbReference type="Reactome" id="R-SPO-76042">
    <property type="pathway name" value="RNA Polymerase II Transcription Initiation And Promoter Clearance"/>
</dbReference>
<dbReference type="Reactome" id="R-SPO-77075">
    <property type="pathway name" value="RNA Pol II CTD phosphorylation and interaction with CE"/>
</dbReference>
<dbReference type="PRO" id="PR:O13768"/>
<dbReference type="Proteomes" id="UP000002485">
    <property type="component" value="Chromosome I"/>
</dbReference>
<dbReference type="GO" id="GO:0000112">
    <property type="term" value="C:nucleotide-excision repair factor 3 complex"/>
    <property type="evidence" value="ECO:0000318"/>
    <property type="project" value="GO_Central"/>
</dbReference>
<dbReference type="GO" id="GO:0005634">
    <property type="term" value="C:nucleus"/>
    <property type="evidence" value="ECO:0000314"/>
    <property type="project" value="PomBase"/>
</dbReference>
<dbReference type="GO" id="GO:0000439">
    <property type="term" value="C:transcription factor TFIIH core complex"/>
    <property type="evidence" value="ECO:0000266"/>
    <property type="project" value="PomBase"/>
</dbReference>
<dbReference type="GO" id="GO:0005675">
    <property type="term" value="C:transcription factor TFIIH holo complex"/>
    <property type="evidence" value="ECO:0000318"/>
    <property type="project" value="GO_Central"/>
</dbReference>
<dbReference type="GO" id="GO:0097550">
    <property type="term" value="C:transcription preinitiation complex"/>
    <property type="evidence" value="ECO:0000318"/>
    <property type="project" value="GO_Central"/>
</dbReference>
<dbReference type="GO" id="GO:0043138">
    <property type="term" value="F:3'-5' DNA helicase activity"/>
    <property type="evidence" value="ECO:0000318"/>
    <property type="project" value="GO_Central"/>
</dbReference>
<dbReference type="GO" id="GO:0005524">
    <property type="term" value="F:ATP binding"/>
    <property type="evidence" value="ECO:0000255"/>
    <property type="project" value="PomBase"/>
</dbReference>
<dbReference type="GO" id="GO:0016887">
    <property type="term" value="F:ATP hydrolysis activity"/>
    <property type="evidence" value="ECO:0007669"/>
    <property type="project" value="RHEA"/>
</dbReference>
<dbReference type="GO" id="GO:0003677">
    <property type="term" value="F:DNA binding"/>
    <property type="evidence" value="ECO:0000305"/>
    <property type="project" value="PomBase"/>
</dbReference>
<dbReference type="GO" id="GO:0016251">
    <property type="term" value="F:RNA polymerase II general transcription initiation factor activity"/>
    <property type="evidence" value="ECO:0000314"/>
    <property type="project" value="PomBase"/>
</dbReference>
<dbReference type="GO" id="GO:0006367">
    <property type="term" value="P:transcription initiation at RNA polymerase II promoter"/>
    <property type="evidence" value="ECO:0000314"/>
    <property type="project" value="PomBase"/>
</dbReference>
<dbReference type="GO" id="GO:0006283">
    <property type="term" value="P:transcription-coupled nucleotide-excision repair"/>
    <property type="evidence" value="ECO:0000250"/>
    <property type="project" value="PomBase"/>
</dbReference>
<dbReference type="CDD" id="cd18029">
    <property type="entry name" value="DEXHc_XPB"/>
    <property type="match status" value="1"/>
</dbReference>
<dbReference type="CDD" id="cd18789">
    <property type="entry name" value="SF2_C_XPB"/>
    <property type="match status" value="1"/>
</dbReference>
<dbReference type="FunFam" id="3.40.50.300:FF:000077">
    <property type="entry name" value="Probable DNA repair helicase RAD25"/>
    <property type="match status" value="1"/>
</dbReference>
<dbReference type="FunFam" id="3.40.50.300:FF:000117">
    <property type="entry name" value="Putative DNA repair helicase rad25"/>
    <property type="match status" value="1"/>
</dbReference>
<dbReference type="Gene3D" id="3.40.50.300">
    <property type="entry name" value="P-loop containing nucleotide triphosphate hydrolases"/>
    <property type="match status" value="2"/>
</dbReference>
<dbReference type="InterPro" id="IPR050615">
    <property type="entry name" value="ATP-dep_DNA_Helicase"/>
</dbReference>
<dbReference type="InterPro" id="IPR032438">
    <property type="entry name" value="ERCC3_RAD25_C"/>
</dbReference>
<dbReference type="InterPro" id="IPR006935">
    <property type="entry name" value="Helicase/UvrB_N"/>
</dbReference>
<dbReference type="InterPro" id="IPR014001">
    <property type="entry name" value="Helicase_ATP-bd"/>
</dbReference>
<dbReference type="InterPro" id="IPR001650">
    <property type="entry name" value="Helicase_C-like"/>
</dbReference>
<dbReference type="InterPro" id="IPR027417">
    <property type="entry name" value="P-loop_NTPase"/>
</dbReference>
<dbReference type="InterPro" id="IPR001161">
    <property type="entry name" value="XPB/Ssl2"/>
</dbReference>
<dbReference type="InterPro" id="IPR032830">
    <property type="entry name" value="XPB/Ssl2_N"/>
</dbReference>
<dbReference type="NCBIfam" id="TIGR00603">
    <property type="entry name" value="rad25"/>
    <property type="match status" value="1"/>
</dbReference>
<dbReference type="PANTHER" id="PTHR11274:SF0">
    <property type="entry name" value="GENERAL TRANSCRIPTION AND DNA REPAIR FACTOR IIH HELICASE SUBUNIT XPB"/>
    <property type="match status" value="1"/>
</dbReference>
<dbReference type="PANTHER" id="PTHR11274">
    <property type="entry name" value="RAD25/XP-B DNA REPAIR HELICASE"/>
    <property type="match status" value="1"/>
</dbReference>
<dbReference type="Pfam" id="PF16203">
    <property type="entry name" value="ERCC3_RAD25_C"/>
    <property type="match status" value="1"/>
</dbReference>
<dbReference type="Pfam" id="PF13625">
    <property type="entry name" value="Helicase_C_3"/>
    <property type="match status" value="1"/>
</dbReference>
<dbReference type="Pfam" id="PF04851">
    <property type="entry name" value="ResIII"/>
    <property type="match status" value="1"/>
</dbReference>
<dbReference type="PRINTS" id="PR00851">
    <property type="entry name" value="XRODRMPGMNTB"/>
</dbReference>
<dbReference type="SMART" id="SM00487">
    <property type="entry name" value="DEXDc"/>
    <property type="match status" value="1"/>
</dbReference>
<dbReference type="SMART" id="SM00490">
    <property type="entry name" value="HELICc"/>
    <property type="match status" value="1"/>
</dbReference>
<dbReference type="SUPFAM" id="SSF52540">
    <property type="entry name" value="P-loop containing nucleoside triphosphate hydrolases"/>
    <property type="match status" value="2"/>
</dbReference>
<dbReference type="PROSITE" id="PS51192">
    <property type="entry name" value="HELICASE_ATP_BIND_1"/>
    <property type="match status" value="1"/>
</dbReference>
<dbReference type="PROSITE" id="PS51194">
    <property type="entry name" value="HELICASE_CTER"/>
    <property type="match status" value="1"/>
</dbReference>
<gene>
    <name evidence="10" type="primary">ptr8</name>
    <name type="synonym">ercc3</name>
    <name type="ORF">SPAC17A5.06</name>
</gene>
<keyword id="KW-0067">ATP-binding</keyword>
<keyword id="KW-0227">DNA damage</keyword>
<keyword id="KW-0234">DNA repair</keyword>
<keyword id="KW-0238">DNA-binding</keyword>
<keyword id="KW-0347">Helicase</keyword>
<keyword id="KW-0378">Hydrolase</keyword>
<keyword id="KW-0413">Isomerase</keyword>
<keyword id="KW-0547">Nucleotide-binding</keyword>
<keyword id="KW-0539">Nucleus</keyword>
<keyword id="KW-1185">Reference proteome</keyword>
<organism>
    <name type="scientific">Schizosaccharomyces pombe (strain 972 / ATCC 24843)</name>
    <name type="common">Fission yeast</name>
    <dbReference type="NCBI Taxonomy" id="284812"/>
    <lineage>
        <taxon>Eukaryota</taxon>
        <taxon>Fungi</taxon>
        <taxon>Dikarya</taxon>
        <taxon>Ascomycota</taxon>
        <taxon>Taphrinomycotina</taxon>
        <taxon>Schizosaccharomycetes</taxon>
        <taxon>Schizosaccharomycetales</taxon>
        <taxon>Schizosaccharomycetaceae</taxon>
        <taxon>Schizosaccharomyces</taxon>
    </lineage>
</organism>
<proteinExistence type="evidence at protein level"/>
<accession>O13768</accession>
<accession>Q9US81</accession>
<protein>
    <recommendedName>
        <fullName>General transcription and DNA repair factor IIH helicase/translocase subunit XPB</fullName>
        <shortName>TFIIH subunit XPB</shortName>
        <ecNumber evidence="12">5.6.2.4</ecNumber>
    </recommendedName>
    <alternativeName>
        <fullName evidence="11">DNA 3'-5' helicase/translocase XPB</fullName>
    </alternativeName>
    <alternativeName>
        <fullName>DNA repair helicase ptr8</fullName>
    </alternativeName>
    <alternativeName>
        <fullName>Poly(A)+ RNA transport protein 8</fullName>
    </alternativeName>
    <alternativeName>
        <fullName>RNA polymerase II transcription factor B subunit ercc3</fullName>
        <shortName evidence="9">TFB subunit ercc3</shortName>
    </alternativeName>
</protein>
<comment type="function">
    <text evidence="1 7 8 12">Probable ATP-dependent 3'-5' DNA helicase/translocase (Probable) (PubMed:15937491). Binds dsDNA rather than ssDNA, unzipping it in a translocase rather than classical helicase activity (By similarity). Component of the general transcription and DNA repair factor IIH (TFIIH) core complex. When complexed to CDK-activating kinase (CAK), involved in RNA transcription by RNA polymerase II. Also involved in transcription-coupled nucleotide excision repair (NER) of damaged DNA. In NER, TFIIH acts by opening DNA around the lesion to allow the excision of the damaged oligonucleotide and its replacement by a new DNA fragment (By similarity). The ATPase activity of XPB/ptr8, but not its helicase activity, is required for DNA opening (PubMed:15937491). In transcription, TFIIH has an essential role in transcription initiation. When the pre-initiation complex (PIC) has been established, TFIIH is required for promoter opening and promoter escape. The ATP-dependent helicase activity of XPB/ptr8 is required for promoter escape but not for promoter opening (PubMed:15937491). Plays a role in mRNA export (PubMed:15937491, PubMed:17212653).</text>
</comment>
<comment type="catalytic activity">
    <reaction evidence="12">
        <text>Couples ATP hydrolysis with the unwinding of duplex DNA by translocating in the 3'-5' direction.</text>
        <dbReference type="EC" id="5.6.2.4"/>
    </reaction>
</comment>
<comment type="catalytic activity">
    <reaction evidence="12">
        <text>ATP + H2O = ADP + phosphate + H(+)</text>
        <dbReference type="Rhea" id="RHEA:13065"/>
        <dbReference type="ChEBI" id="CHEBI:15377"/>
        <dbReference type="ChEBI" id="CHEBI:15378"/>
        <dbReference type="ChEBI" id="CHEBI:30616"/>
        <dbReference type="ChEBI" id="CHEBI:43474"/>
        <dbReference type="ChEBI" id="CHEBI:456216"/>
        <dbReference type="EC" id="5.6.2.4"/>
    </reaction>
</comment>
<comment type="subunit">
    <text evidence="6">Component of the 7-subunit TFIIH core complex composed of XPB/ptr8, XPD/rad15, ssl1, tfb1, tfb2, tfb4 and tfb5, which is active in NER. The core complex associates with the 3-subunit CTD-kinase module TFIIK composed of mcs2/cyclin H, mcs6/cdk7 and pmh1/tfb3 to form the 10-subunit holoenzyme (holo-TFIIH) active in transcription.</text>
</comment>
<comment type="subcellular location">
    <subcellularLocation>
        <location evidence="5">Nucleus</location>
    </subcellularLocation>
</comment>
<comment type="similarity">
    <text evidence="11">Belongs to the helicase family. RAD25/XPB subfamily.</text>
</comment>